<gene>
    <name type="ordered locus">SPs0230</name>
</gene>
<comment type="similarity">
    <text evidence="1">Belongs to the UPF0340 family.</text>
</comment>
<sequence>MLNNLEKQTREIVIDVVERSAIQPGNLFVLGLSSSEILGSRIGKQSSLEVGQIVVEVVLDELNKRGVHLAVQGCEHVNRALVVERHVAESKQLEIVNVVPNLHAGGSAQMAAFQLMSDPVEVEEVIAHAGLDIGDTAIGMHIKRVQIPLIPCQRELGGAHVTALASRPKLIGGARADYNMDIIRKS</sequence>
<dbReference type="EMBL" id="BA000034">
    <property type="protein sequence ID" value="BAC63325.1"/>
    <property type="molecule type" value="Genomic_DNA"/>
</dbReference>
<dbReference type="RefSeq" id="WP_002995157.1">
    <property type="nucleotide sequence ID" value="NC_004606.1"/>
</dbReference>
<dbReference type="SMR" id="P0DH11"/>
<dbReference type="KEGG" id="sps:SPs0230"/>
<dbReference type="HOGENOM" id="CLU_106658_0_0_9"/>
<dbReference type="Gene3D" id="3.40.50.10360">
    <property type="entry name" value="Hypothetical protein TT1679"/>
    <property type="match status" value="1"/>
</dbReference>
<dbReference type="HAMAP" id="MF_00800">
    <property type="entry name" value="UPF0340"/>
    <property type="match status" value="1"/>
</dbReference>
<dbReference type="InterPro" id="IPR028345">
    <property type="entry name" value="Antibiotic_NAT-like"/>
</dbReference>
<dbReference type="InterPro" id="IPR006340">
    <property type="entry name" value="DUF436"/>
</dbReference>
<dbReference type="NCBIfam" id="TIGR01440">
    <property type="entry name" value="TIGR01440 family protein"/>
    <property type="match status" value="1"/>
</dbReference>
<dbReference type="Pfam" id="PF04260">
    <property type="entry name" value="DUF436"/>
    <property type="match status" value="1"/>
</dbReference>
<dbReference type="PIRSF" id="PIRSF007510">
    <property type="entry name" value="UCP007510"/>
    <property type="match status" value="1"/>
</dbReference>
<dbReference type="SUPFAM" id="SSF110710">
    <property type="entry name" value="TTHA0583/YokD-like"/>
    <property type="match status" value="1"/>
</dbReference>
<accession>P0DH11</accession>
<accession>Q7CER1</accession>
<accession>Q8NZF5</accession>
<reference key="1">
    <citation type="journal article" date="2003" name="Genome Res.">
        <title>Genome sequence of an M3 strain of Streptococcus pyogenes reveals a large-scale genomic rearrangement in invasive strains and new insights into phage evolution.</title>
        <authorList>
            <person name="Nakagawa I."/>
            <person name="Kurokawa K."/>
            <person name="Yamashita A."/>
            <person name="Nakata M."/>
            <person name="Tomiyasu Y."/>
            <person name="Okahashi N."/>
            <person name="Kawabata S."/>
            <person name="Yamazaki K."/>
            <person name="Shiba T."/>
            <person name="Yasunaga T."/>
            <person name="Hayashi H."/>
            <person name="Hattori M."/>
            <person name="Hamada S."/>
        </authorList>
    </citation>
    <scope>NUCLEOTIDE SEQUENCE [LARGE SCALE GENOMIC DNA]</scope>
    <source>
        <strain>SSI-1</strain>
    </source>
</reference>
<evidence type="ECO:0000255" key="1">
    <source>
        <dbReference type="HAMAP-Rule" id="MF_00800"/>
    </source>
</evidence>
<feature type="chain" id="PRO_0000411645" description="UPF0340 protein SPs0230">
    <location>
        <begin position="1"/>
        <end position="186"/>
    </location>
</feature>
<protein>
    <recommendedName>
        <fullName evidence="1">UPF0340 protein SPs0230</fullName>
    </recommendedName>
</protein>
<organism>
    <name type="scientific">Streptococcus pyogenes serotype M3 (strain SSI-1)</name>
    <dbReference type="NCBI Taxonomy" id="193567"/>
    <lineage>
        <taxon>Bacteria</taxon>
        <taxon>Bacillati</taxon>
        <taxon>Bacillota</taxon>
        <taxon>Bacilli</taxon>
        <taxon>Lactobacillales</taxon>
        <taxon>Streptococcaceae</taxon>
        <taxon>Streptococcus</taxon>
    </lineage>
</organism>
<name>Y1636_STRPQ</name>
<proteinExistence type="inferred from homology"/>